<dbReference type="EMBL" id="DS231848">
    <property type="protein sequence ID" value="EDS36707.1"/>
    <property type="status" value="ALT_SEQ"/>
    <property type="molecule type" value="Genomic_DNA"/>
</dbReference>
<dbReference type="RefSeq" id="XP_001844367.1">
    <property type="nucleotide sequence ID" value="XM_001844315.1"/>
</dbReference>
<dbReference type="SMR" id="B0W6N3"/>
<dbReference type="FunCoup" id="B0W6N3">
    <property type="interactions" value="2441"/>
</dbReference>
<dbReference type="STRING" id="7176.B0W6N3"/>
<dbReference type="EnsemblMetazoa" id="CQUJHB011721.R18130">
    <property type="protein sequence ID" value="CQUJHB011721.P18130"/>
    <property type="gene ID" value="CQUJHB011721"/>
</dbReference>
<dbReference type="EnsemblMetazoa" id="XM_038250124.1">
    <property type="protein sequence ID" value="XP_038106052.1"/>
    <property type="gene ID" value="LOC6033979"/>
</dbReference>
<dbReference type="KEGG" id="cqu:CpipJ_CPIJ002784"/>
<dbReference type="VEuPathDB" id="VectorBase:CPIJ002784"/>
<dbReference type="VEuPathDB" id="VectorBase:CQUJHB011721"/>
<dbReference type="eggNOG" id="KOG2072">
    <property type="taxonomic scope" value="Eukaryota"/>
</dbReference>
<dbReference type="HOGENOM" id="CLU_002096_1_1_1"/>
<dbReference type="InParanoid" id="B0W6N3"/>
<dbReference type="OrthoDB" id="18884at2759"/>
<dbReference type="Proteomes" id="UP000002320">
    <property type="component" value="Unassembled WGS sequence"/>
</dbReference>
<dbReference type="GO" id="GO:0016282">
    <property type="term" value="C:eukaryotic 43S preinitiation complex"/>
    <property type="evidence" value="ECO:0007669"/>
    <property type="project" value="UniProtKB-UniRule"/>
</dbReference>
<dbReference type="GO" id="GO:0033290">
    <property type="term" value="C:eukaryotic 48S preinitiation complex"/>
    <property type="evidence" value="ECO:0007669"/>
    <property type="project" value="UniProtKB-UniRule"/>
</dbReference>
<dbReference type="GO" id="GO:0071540">
    <property type="term" value="C:eukaryotic translation initiation factor 3 complex, eIF3e"/>
    <property type="evidence" value="ECO:0007669"/>
    <property type="project" value="TreeGrafter"/>
</dbReference>
<dbReference type="GO" id="GO:0071541">
    <property type="term" value="C:eukaryotic translation initiation factor 3 complex, eIF3m"/>
    <property type="evidence" value="ECO:0007669"/>
    <property type="project" value="TreeGrafter"/>
</dbReference>
<dbReference type="GO" id="GO:0043614">
    <property type="term" value="C:multi-eIF complex"/>
    <property type="evidence" value="ECO:0007669"/>
    <property type="project" value="TreeGrafter"/>
</dbReference>
<dbReference type="GO" id="GO:0003729">
    <property type="term" value="F:mRNA binding"/>
    <property type="evidence" value="ECO:0007669"/>
    <property type="project" value="TreeGrafter"/>
</dbReference>
<dbReference type="GO" id="GO:0003743">
    <property type="term" value="F:translation initiation factor activity"/>
    <property type="evidence" value="ECO:0007669"/>
    <property type="project" value="UniProtKB-UniRule"/>
</dbReference>
<dbReference type="GO" id="GO:0001732">
    <property type="term" value="P:formation of cytoplasmic translation initiation complex"/>
    <property type="evidence" value="ECO:0007669"/>
    <property type="project" value="UniProtKB-UniRule"/>
</dbReference>
<dbReference type="GO" id="GO:0002188">
    <property type="term" value="P:translation reinitiation"/>
    <property type="evidence" value="ECO:0007669"/>
    <property type="project" value="TreeGrafter"/>
</dbReference>
<dbReference type="FunFam" id="1.25.40.860:FF:000007">
    <property type="entry name" value="Eukaryotic translation initiation factor 3 subunit A"/>
    <property type="match status" value="1"/>
</dbReference>
<dbReference type="FunFam" id="4.10.860.10:FF:000001">
    <property type="entry name" value="Eukaryotic translation initiation factor 3 subunit A"/>
    <property type="match status" value="1"/>
</dbReference>
<dbReference type="Gene3D" id="1.25.40.860">
    <property type="match status" value="2"/>
</dbReference>
<dbReference type="Gene3D" id="4.10.860.10">
    <property type="entry name" value="UVR domain"/>
    <property type="match status" value="1"/>
</dbReference>
<dbReference type="HAMAP" id="MF_03000">
    <property type="entry name" value="eIF3a"/>
    <property type="match status" value="1"/>
</dbReference>
<dbReference type="InterPro" id="IPR027512">
    <property type="entry name" value="EIF3A"/>
</dbReference>
<dbReference type="InterPro" id="IPR054711">
    <property type="entry name" value="eIF3a_PCI_TPR-like"/>
</dbReference>
<dbReference type="InterPro" id="IPR000717">
    <property type="entry name" value="PCI_dom"/>
</dbReference>
<dbReference type="PANTHER" id="PTHR14005:SF0">
    <property type="entry name" value="EUKARYOTIC TRANSLATION INITIATION FACTOR 3 SUBUNIT A"/>
    <property type="match status" value="1"/>
</dbReference>
<dbReference type="PANTHER" id="PTHR14005">
    <property type="entry name" value="EUKARYOTIC TRANSLATION INITIATION FACTOR 3, THETA SUBUNIT"/>
    <property type="match status" value="1"/>
</dbReference>
<dbReference type="Pfam" id="PF22591">
    <property type="entry name" value="eIF3a_PCI_TPR-like"/>
    <property type="match status" value="1"/>
</dbReference>
<dbReference type="Pfam" id="PF01399">
    <property type="entry name" value="PCI"/>
    <property type="match status" value="1"/>
</dbReference>
<dbReference type="SMART" id="SM00088">
    <property type="entry name" value="PINT"/>
    <property type="match status" value="1"/>
</dbReference>
<dbReference type="PROSITE" id="PS50250">
    <property type="entry name" value="PCI"/>
    <property type="match status" value="1"/>
</dbReference>
<evidence type="ECO:0000255" key="1">
    <source>
        <dbReference type="HAMAP-Rule" id="MF_03000"/>
    </source>
</evidence>
<evidence type="ECO:0000255" key="2">
    <source>
        <dbReference type="PROSITE-ProRule" id="PRU01185"/>
    </source>
</evidence>
<evidence type="ECO:0000256" key="3">
    <source>
        <dbReference type="SAM" id="MobiDB-lite"/>
    </source>
</evidence>
<evidence type="ECO:0000305" key="4"/>
<protein>
    <recommendedName>
        <fullName evidence="1">Eukaryotic translation initiation factor 3 subunit A</fullName>
        <shortName evidence="1">eIF3a</shortName>
    </recommendedName>
    <alternativeName>
        <fullName evidence="1">Eukaryotic translation initiation factor 3 subunit 10</fullName>
    </alternativeName>
</protein>
<organism>
    <name type="scientific">Culex quinquefasciatus</name>
    <name type="common">Southern house mosquito</name>
    <name type="synonym">Culex pungens</name>
    <dbReference type="NCBI Taxonomy" id="7176"/>
    <lineage>
        <taxon>Eukaryota</taxon>
        <taxon>Metazoa</taxon>
        <taxon>Ecdysozoa</taxon>
        <taxon>Arthropoda</taxon>
        <taxon>Hexapoda</taxon>
        <taxon>Insecta</taxon>
        <taxon>Pterygota</taxon>
        <taxon>Neoptera</taxon>
        <taxon>Endopterygota</taxon>
        <taxon>Diptera</taxon>
        <taxon>Nematocera</taxon>
        <taxon>Culicoidea</taxon>
        <taxon>Culicidae</taxon>
        <taxon>Culicinae</taxon>
        <taxon>Culicini</taxon>
        <taxon>Culex</taxon>
        <taxon>Culex</taxon>
    </lineage>
</organism>
<comment type="function">
    <text evidence="1">RNA-binding component of the eukaryotic translation initiation factor 3 (eIF-3) complex, which is involved in protein synthesis of a specialized repertoire of mRNAs and, together with other initiation factors, stimulates binding of mRNA and methionyl-tRNAi to the 40S ribosome. The eIF-3 complex specifically targets and initiates translation of a subset of mRNAs involved in cell proliferation.</text>
</comment>
<comment type="subunit">
    <text evidence="1">Component of the eukaryotic translation initiation factor 3 (eIF-3) complex.</text>
</comment>
<comment type="subcellular location">
    <subcellularLocation>
        <location evidence="1">Cytoplasm</location>
    </subcellularLocation>
</comment>
<comment type="similarity">
    <text evidence="1">Belongs to the eIF-3 subunit A family.</text>
</comment>
<comment type="sequence caution" evidence="4">
    <conflict type="erroneous gene model prediction">
        <sequence resource="EMBL-CDS" id="EDS36707"/>
    </conflict>
</comment>
<name>EIF3A_CULQU</name>
<reference key="1">
    <citation type="submission" date="2007-03" db="EMBL/GenBank/DDBJ databases">
        <title>Annotation of Culex pipiens quinquefasciatus.</title>
        <authorList>
            <consortium name="The Broad Institute Genome Sequencing Platform"/>
            <person name="Atkinson P.W."/>
            <person name="Hemingway J."/>
            <person name="Christensen B.M."/>
            <person name="Higgs S."/>
            <person name="Kodira C.D."/>
            <person name="Hannick L.I."/>
            <person name="Megy K."/>
            <person name="O'Leary S.B."/>
            <person name="Pearson M."/>
            <person name="Haas B.J."/>
            <person name="Mauceli E."/>
            <person name="Wortman J.R."/>
            <person name="Lee N.H."/>
            <person name="Guigo R."/>
            <person name="Stanke M."/>
            <person name="Alvarado L."/>
            <person name="Amedeo P."/>
            <person name="Antoine C.H."/>
            <person name="Arensburger P."/>
            <person name="Bidwell S.L."/>
            <person name="Crawford M."/>
            <person name="Camaro F."/>
            <person name="Devon K."/>
            <person name="Engels R."/>
            <person name="Hammond M."/>
            <person name="Howarth C."/>
            <person name="Koehrsen M."/>
            <person name="Lawson D."/>
            <person name="Montgomery P."/>
            <person name="Nene V."/>
            <person name="Nusbaum C."/>
            <person name="Puiu D."/>
            <person name="Romero-Severson J."/>
            <person name="Severson D.W."/>
            <person name="Shumway M."/>
            <person name="Sisk P."/>
            <person name="Stolte C."/>
            <person name="Zeng Q."/>
            <person name="Eisenstadt E."/>
            <person name="Fraser-Liggett C.M."/>
            <person name="Strausberg R."/>
            <person name="Galagan J."/>
            <person name="Birren B."/>
            <person name="Collins F.H."/>
        </authorList>
    </citation>
    <scope>NUCLEOTIDE SEQUENCE [LARGE SCALE GENOMIC DNA]</scope>
    <source>
        <strain>JHB</strain>
    </source>
</reference>
<keyword id="KW-0963">Cytoplasm</keyword>
<keyword id="KW-0396">Initiation factor</keyword>
<keyword id="KW-0648">Protein biosynthesis</keyword>
<keyword id="KW-1185">Reference proteome</keyword>
<keyword id="KW-0694">RNA-binding</keyword>
<feature type="chain" id="PRO_0000366333" description="Eukaryotic translation initiation factor 3 subunit A">
    <location>
        <begin position="1"/>
        <end position="1149"/>
    </location>
</feature>
<feature type="domain" description="PCI" evidence="2">
    <location>
        <begin position="317"/>
        <end position="498"/>
    </location>
</feature>
<feature type="region of interest" description="Disordered" evidence="3">
    <location>
        <begin position="496"/>
        <end position="515"/>
    </location>
</feature>
<feature type="region of interest" description="Disordered" evidence="3">
    <location>
        <begin position="811"/>
        <end position="1149"/>
    </location>
</feature>
<feature type="compositionally biased region" description="Basic and acidic residues" evidence="3">
    <location>
        <begin position="811"/>
        <end position="885"/>
    </location>
</feature>
<feature type="compositionally biased region" description="Gly residues" evidence="3">
    <location>
        <begin position="886"/>
        <end position="895"/>
    </location>
</feature>
<feature type="compositionally biased region" description="Basic and acidic residues" evidence="3">
    <location>
        <begin position="908"/>
        <end position="924"/>
    </location>
</feature>
<feature type="compositionally biased region" description="Low complexity" evidence="3">
    <location>
        <begin position="925"/>
        <end position="937"/>
    </location>
</feature>
<feature type="compositionally biased region" description="Basic and acidic residues" evidence="3">
    <location>
        <begin position="961"/>
        <end position="970"/>
    </location>
</feature>
<feature type="compositionally biased region" description="Basic and acidic residues" evidence="3">
    <location>
        <begin position="1005"/>
        <end position="1095"/>
    </location>
</feature>
<feature type="compositionally biased region" description="Basic and acidic residues" evidence="3">
    <location>
        <begin position="1113"/>
        <end position="1132"/>
    </location>
</feature>
<gene>
    <name evidence="1" type="primary">eIF3-S10</name>
    <name type="ORF">CPIJ002784</name>
</gene>
<sequence>MSRYMQRPENALKRANEFIEVGKPARALDTLQEVFRIKKWTYTWSEAVIEPIMFKYLDLCVELKKSHIAKEGLFQYRNMFQMLNVGSLENVIRGYLKMAEERTEAAQQQSSQAILDIDDLDNLATPESILMSAVCGEDAQDRSDRTILLPWVKFLWESYGQCLELLKVNSHCENLYHDIAKMAFAFCLKYNRKMEFRKLCEKLRKHLDDISKVSSQTANVSISKPETQQLNLDTRLNQLDCAIQMELWLEAYKAIEDIHGLMTLSKKTPMPKTMALYYQKLAMVFWKAGNQLFHAAALLKLFQLSRDMKKNVTQEEIQRMTSHVLIATLAIPLPSAHPEFDRFIETDKSPLEKAQKLAVLLGLQQPPSRVSLLKEVLRLNVLQLAAPQFQNLYKWLEVEFDPLNLCSRVQGVIEEITADENSPYTQYTQALQDVTLVRLVRQVSQVYQSIEFSRFLSLAKFANSFYLERILVDCVRHNDMQITIDHRNHSVHFGTDLSESQREDHPDGPTLQSMPSEQVRSQLVNMSVVLHRAIATINPNRKKADRERLRNQMVKNYEENMVKDHQRILQRQKKIEDRKEYIERVNLEREELEQRQLEEAARQQKLAEMRRLEQENEERERKRHENEIQMIKERNMKDKIDQIKQSASGQKLLKKIDEEDIKKMNAEEIAAKEAEERQKERKAHDNNLKSQEKKIDYFERAKRLEEIPLIEKYLEDKLVQDKEFWEKQEASRIEAAIAERKNAEQVQERLRRMQADRDVFWQKLKGERSNAFAEKLKVFNAALEEERRRRLAERVIQRREERRQKWLREKEEERRRIEEELRKQREEEERIERERRAEERRIENEKQRVIMEKQRAKEEEIERKLAEEKERLKERAPRGEKEERGGGGGGGGAWRGRGDTAAPAESAAKPESDWRNAREAREPAPESAGASSAAAPAPKKDGVWQPSGRFREGRGAPGADRPPRGDDREPPAAAAGESKWRRGGGGADDDKDDGPRPRVGAGDRGPMRRGDGDRDDRGPMRRGDRPPMRDGDRPGMRRDDRGDRREGGAPDRRDFGGRGGDRRDDRRDDRGPRREGGGERGGDVWRRAPQEDRRGGAAGGESGGNWRNARQAEPAKPREERRGGEERPKEARAAAGPDEDGWTDVKHHR</sequence>
<accession>B0W6N3</accession>
<proteinExistence type="inferred from homology"/>